<proteinExistence type="evidence at transcript level"/>
<feature type="chain" id="PRO_0000315732" description="Metallophosphoesterase 1">
    <location>
        <begin position="1"/>
        <end position="381"/>
    </location>
</feature>
<feature type="transmembrane region" description="Helical" evidence="2">
    <location>
        <begin position="15"/>
        <end position="35"/>
    </location>
</feature>
<feature type="transmembrane region" description="Helical" evidence="2">
    <location>
        <begin position="341"/>
        <end position="361"/>
    </location>
</feature>
<feature type="short sequence motif" description="Di-lysine motif" evidence="1">
    <location>
        <begin position="377"/>
        <end position="381"/>
    </location>
</feature>
<feature type="binding site" evidence="1">
    <location>
        <position position="59"/>
    </location>
    <ligand>
        <name>a divalent metal cation</name>
        <dbReference type="ChEBI" id="CHEBI:60240"/>
        <label>2</label>
    </ligand>
</feature>
<feature type="binding site" evidence="1">
    <location>
        <position position="101"/>
    </location>
    <ligand>
        <name>a divalent metal cation</name>
        <dbReference type="ChEBI" id="CHEBI:60240"/>
        <label>1</label>
    </ligand>
</feature>
<feature type="binding site" evidence="1">
    <location>
        <position position="101"/>
    </location>
    <ligand>
        <name>a divalent metal cation</name>
        <dbReference type="ChEBI" id="CHEBI:60240"/>
        <label>2</label>
    </ligand>
</feature>
<feature type="binding site" evidence="1">
    <location>
        <position position="139"/>
    </location>
    <ligand>
        <name>a divalent metal cation</name>
        <dbReference type="ChEBI" id="CHEBI:60240"/>
        <label>1</label>
    </ligand>
</feature>
<feature type="binding site" evidence="1">
    <location>
        <position position="234"/>
    </location>
    <ligand>
        <name>a divalent metal cation</name>
        <dbReference type="ChEBI" id="CHEBI:60240"/>
        <label>1</label>
    </ligand>
</feature>
<feature type="binding site" evidence="1">
    <location>
        <position position="234"/>
    </location>
    <ligand>
        <name>a divalent metal cation</name>
        <dbReference type="ChEBI" id="CHEBI:60240"/>
        <label>2</label>
    </ligand>
</feature>
<feature type="binding site" evidence="1">
    <location>
        <position position="288"/>
    </location>
    <ligand>
        <name>a divalent metal cation</name>
        <dbReference type="ChEBI" id="CHEBI:60240"/>
        <label>1</label>
    </ligand>
</feature>
<feature type="binding site" evidence="1">
    <location>
        <position position="290"/>
    </location>
    <ligand>
        <name>a divalent metal cation</name>
        <dbReference type="ChEBI" id="CHEBI:60240"/>
        <label>2</label>
    </ligand>
</feature>
<accession>Q566Y9</accession>
<keyword id="KW-0931">ER-Golgi transport</keyword>
<keyword id="KW-0337">GPI-anchor biosynthesis</keyword>
<keyword id="KW-0378">Hydrolase</keyword>
<keyword id="KW-0464">Manganese</keyword>
<keyword id="KW-0472">Membrane</keyword>
<keyword id="KW-0479">Metal-binding</keyword>
<keyword id="KW-1185">Reference proteome</keyword>
<keyword id="KW-0812">Transmembrane</keyword>
<keyword id="KW-1133">Transmembrane helix</keyword>
<keyword id="KW-0813">Transport</keyword>
<evidence type="ECO:0000250" key="1">
    <source>
        <dbReference type="UniProtKB" id="Q53F39"/>
    </source>
</evidence>
<evidence type="ECO:0000255" key="2"/>
<evidence type="ECO:0000305" key="3"/>
<protein>
    <recommendedName>
        <fullName evidence="1">Metallophosphoesterase 1</fullName>
        <ecNumber evidence="1">3.1.-.-</ecNumber>
    </recommendedName>
    <alternativeName>
        <fullName>Post-GPI attachment to proteins factor 5</fullName>
    </alternativeName>
</protein>
<gene>
    <name evidence="1" type="primary">mppe1</name>
    <name evidence="1" type="synonym">pgap5</name>
    <name type="ORF">zgc:112219</name>
</gene>
<dbReference type="EC" id="3.1.-.-" evidence="1"/>
<dbReference type="EMBL" id="BC093272">
    <property type="protein sequence ID" value="AAH93272.1"/>
    <property type="molecule type" value="mRNA"/>
</dbReference>
<dbReference type="RefSeq" id="NP_001017701.1">
    <property type="nucleotide sequence ID" value="NM_001017701.1"/>
</dbReference>
<dbReference type="FunCoup" id="Q566Y9">
    <property type="interactions" value="1520"/>
</dbReference>
<dbReference type="STRING" id="7955.ENSDARP00000066782"/>
<dbReference type="PaxDb" id="7955-ENSDARP00000066782"/>
<dbReference type="GeneID" id="550396"/>
<dbReference type="KEGG" id="dre:550396"/>
<dbReference type="AGR" id="ZFIN:ZDB-GENE-050417-195"/>
<dbReference type="CTD" id="65258"/>
<dbReference type="ZFIN" id="ZDB-GENE-050417-195">
    <property type="gene designation" value="mppe1"/>
</dbReference>
<dbReference type="eggNOG" id="KOG3662">
    <property type="taxonomic scope" value="Eukaryota"/>
</dbReference>
<dbReference type="InParanoid" id="Q566Y9"/>
<dbReference type="OrthoDB" id="9984693at2759"/>
<dbReference type="PhylomeDB" id="Q566Y9"/>
<dbReference type="PRO" id="PR:Q566Y9"/>
<dbReference type="Proteomes" id="UP000000437">
    <property type="component" value="Chromosome 24"/>
</dbReference>
<dbReference type="GO" id="GO:0070971">
    <property type="term" value="C:endoplasmic reticulum exit site"/>
    <property type="evidence" value="ECO:0000250"/>
    <property type="project" value="UniProtKB"/>
</dbReference>
<dbReference type="GO" id="GO:0033116">
    <property type="term" value="C:endoplasmic reticulum-Golgi intermediate compartment membrane"/>
    <property type="evidence" value="ECO:0007669"/>
    <property type="project" value="UniProtKB-SubCell"/>
</dbReference>
<dbReference type="GO" id="GO:0005794">
    <property type="term" value="C:Golgi apparatus"/>
    <property type="evidence" value="ECO:0007669"/>
    <property type="project" value="UniProtKB-SubCell"/>
</dbReference>
<dbReference type="GO" id="GO:0062050">
    <property type="term" value="F:GPI-mannose ethanolamine phosphate phosphodiesterase activity"/>
    <property type="evidence" value="ECO:0000250"/>
    <property type="project" value="UniProtKB"/>
</dbReference>
<dbReference type="GO" id="GO:0030145">
    <property type="term" value="F:manganese ion binding"/>
    <property type="evidence" value="ECO:0000250"/>
    <property type="project" value="UniProtKB"/>
</dbReference>
<dbReference type="GO" id="GO:0006888">
    <property type="term" value="P:endoplasmic reticulum to Golgi vesicle-mediated transport"/>
    <property type="evidence" value="ECO:0000250"/>
    <property type="project" value="UniProtKB"/>
</dbReference>
<dbReference type="GO" id="GO:0006506">
    <property type="term" value="P:GPI anchor biosynthetic process"/>
    <property type="evidence" value="ECO:0000250"/>
    <property type="project" value="UniProtKB"/>
</dbReference>
<dbReference type="CDD" id="cd08165">
    <property type="entry name" value="MPP_MPPE1"/>
    <property type="match status" value="1"/>
</dbReference>
<dbReference type="FunFam" id="3.60.21.10:FF:000022">
    <property type="entry name" value="Putative metallophosphoesterase 1"/>
    <property type="match status" value="1"/>
</dbReference>
<dbReference type="Gene3D" id="3.60.21.10">
    <property type="match status" value="1"/>
</dbReference>
<dbReference type="InterPro" id="IPR004843">
    <property type="entry name" value="Calcineurin-like_PHP_ApaH"/>
</dbReference>
<dbReference type="InterPro" id="IPR029052">
    <property type="entry name" value="Metallo-depent_PP-like"/>
</dbReference>
<dbReference type="InterPro" id="IPR039541">
    <property type="entry name" value="MPP_MPPE1"/>
</dbReference>
<dbReference type="InterPro" id="IPR033308">
    <property type="entry name" value="PGAP5/Cdc1/Ted1"/>
</dbReference>
<dbReference type="PANTHER" id="PTHR13315">
    <property type="entry name" value="METALLO PHOSPHOESTERASE RELATED"/>
    <property type="match status" value="1"/>
</dbReference>
<dbReference type="PANTHER" id="PTHR13315:SF0">
    <property type="entry name" value="METALLOPHOSPHOESTERASE 1"/>
    <property type="match status" value="1"/>
</dbReference>
<dbReference type="Pfam" id="PF00149">
    <property type="entry name" value="Metallophos"/>
    <property type="match status" value="1"/>
</dbReference>
<dbReference type="SUPFAM" id="SSF56300">
    <property type="entry name" value="Metallo-dependent phosphatases"/>
    <property type="match status" value="1"/>
</dbReference>
<name>MPPE1_DANRE</name>
<organism>
    <name type="scientific">Danio rerio</name>
    <name type="common">Zebrafish</name>
    <name type="synonym">Brachydanio rerio</name>
    <dbReference type="NCBI Taxonomy" id="7955"/>
    <lineage>
        <taxon>Eukaryota</taxon>
        <taxon>Metazoa</taxon>
        <taxon>Chordata</taxon>
        <taxon>Craniata</taxon>
        <taxon>Vertebrata</taxon>
        <taxon>Euteleostomi</taxon>
        <taxon>Actinopterygii</taxon>
        <taxon>Neopterygii</taxon>
        <taxon>Teleostei</taxon>
        <taxon>Ostariophysi</taxon>
        <taxon>Cypriniformes</taxon>
        <taxon>Danionidae</taxon>
        <taxon>Danioninae</taxon>
        <taxon>Danio</taxon>
    </lineage>
</organism>
<comment type="function">
    <text evidence="1">Metallophosphoesterase that catalyzes the removal of a side-chain ethanolamine-phosphate (EtNP) from the second mannose of the GPI-anchor protein intermediate. Participates in the glycan remodeling steps of GPI-anchor maturation to allow an efficient transport of GPI-anchor proteins from the endoplasmic reticulum to the Golgi.</text>
</comment>
<comment type="cofactor">
    <cofactor evidence="1">
        <name>Mn(2+)</name>
        <dbReference type="ChEBI" id="CHEBI:29035"/>
    </cofactor>
    <text evidence="1">Binds 2 manganese ions per subunit.</text>
</comment>
<comment type="subcellular location">
    <subcellularLocation>
        <location evidence="1">Endoplasmic reticulum-Golgi intermediate compartment membrane</location>
        <topology evidence="2">Multi-pass membrane protein</topology>
    </subcellularLocation>
    <text evidence="1">Also localizes to endoplasmic reticulum exit site.</text>
</comment>
<comment type="domain">
    <text evidence="1">The di-lysine motif (KxKxx) acts as an endoplasmic reticulum retrieval signal.</text>
</comment>
<comment type="similarity">
    <text evidence="3">Belongs to the metallophosphoesterase superfamily. MPPE1 family.</text>
</comment>
<sequence>MTLVFGSSCRLAVTLIFAFVSVFVFCEYVIYYLVILRCSWPLLEIEDSHSPLRALFLSDTHLLGAIRGHWLDKLRREWQMERAFQTSMWLLNPEVVFILGDVFDEGKWSTSQDWEDDVRRFKRIFRHPVDTKLVVLVGNHDIGFHHEMTKQKLERFEQVFNVTSARILTIKGVNFLLVNSVALHGDHCPICQHVEEELQKLSHALNCSIQGAQHNGQCKNAARFAPAAPVLLQHYPLYRVSDAMCTGVDTAPLDEQYLLFQERYDVISKNASKKLLWWFKPRLILSGHTHNGCEVLHEKLYPEISVPSFSWRNRNNPSFVLGTFSQSEFQLSKCFLPEERTVLVVYCSSCLIIALITLIHLKMFRNSLQFTNNLIGKHKTL</sequence>
<reference key="1">
    <citation type="submission" date="2005-04" db="EMBL/GenBank/DDBJ databases">
        <authorList>
            <consortium name="NIH - Zebrafish Gene Collection (ZGC) project"/>
        </authorList>
    </citation>
    <scope>NUCLEOTIDE SEQUENCE [LARGE SCALE MRNA]</scope>
    <source>
        <tissue>Larva</tissue>
    </source>
</reference>